<keyword id="KW-0025">Alternative splicing</keyword>
<keyword id="KW-0968">Cytoplasmic vesicle</keyword>
<keyword id="KW-0967">Endosome</keyword>
<keyword id="KW-0479">Metal-binding</keyword>
<keyword id="KW-1185">Reference proteome</keyword>
<keyword id="KW-0808">Transferase</keyword>
<keyword id="KW-0833">Ubl conjugation pathway</keyword>
<keyword id="KW-0862">Zinc</keyword>
<keyword id="KW-0863">Zinc-finger</keyword>
<comment type="function">
    <text evidence="8 9 10">E3 ubiquitin-protein ligase that mediates ubiquitination and subsequent proteasomal degradation of target proteins (PubMed:28351989, PubMed:32786047). E3 ubiquitin ligases accept ubiquitin from an E2 ubiquitin-conjugating enzyme in the form of a thioester and then directly transfers the ubiquitin to targeted substrates (PubMed:28351989, PubMed:32786047). It probably triggers the ubiquitin-mediated degradation of different substrates (PubMed:28351989, PubMed:32786047). Mediates the proteasomal-dependent degradation of ATG6, a component of the autophagosome complex (PubMed:28351989). Requires TRAF1A/MUSE14 and TRAF1B/MUSE13 to target ATG6 for ubiquitination and subsequent regulation of autophagosome assembly (PubMed:28351989). Modulates directly the ubiquitination and proteasomal-dependent degradation of FREE1, a component of the ESCRT-I complex (PubMed:32753431, PubMed:32786047). Modulates directly the ubiquitination and proteasomal-dependent degradation of ELC/VPS23A, a component of the ESCRT-I complex (PubMed:32753431).</text>
</comment>
<comment type="catalytic activity">
    <reaction evidence="8">
        <text>S-ubiquitinyl-[E2 ubiquitin-conjugating enzyme]-L-cysteine + [acceptor protein]-L-lysine = [E2 ubiquitin-conjugating enzyme]-L-cysteine + N(6)-ubiquitinyl-[acceptor protein]-L-lysine.</text>
        <dbReference type="EC" id="2.3.2.27"/>
    </reaction>
</comment>
<comment type="pathway">
    <text evidence="13">Protein modification; protein ubiquitination.</text>
</comment>
<comment type="subunit">
    <text evidence="5 6 7 8 9 10">Interacts with RAP2-2 (PubMed:17873090). Interacts with SINAT6 (PubMed:24350984). Interacts with ATG6 and TRAF1A (PubMed:28351989). Interacts with WAV3 (PubMed:22122664). Interacts with FREE1 (PubMed:32753431, PubMed:32786047). Interacts with ELC/VPS23A (PubMed:32753431).</text>
</comment>
<comment type="subcellular location">
    <subcellularLocation>
        <location evidence="9 10">Endosome</location>
        <location evidence="9 10">Multivesicular body</location>
    </subcellularLocation>
    <subcellularLocation>
        <location evidence="9">Cytoplasmic vesicle</location>
        <location evidence="9">Autophagosome</location>
    </subcellularLocation>
</comment>
<comment type="alternative products">
    <event type="alternative splicing"/>
    <isoform>
        <id>Q9M2P4-1</id>
        <name>1</name>
        <sequence type="displayed"/>
    </isoform>
    <isoform>
        <id>Q9M2P4-2</id>
        <name>2</name>
        <sequence type="described" ref="VSP_027587 VSP_027588"/>
    </isoform>
</comment>
<comment type="induction">
    <text evidence="7">Induced by drought stress, salt stress, osmotic shock and abscisic acid (ABA).</text>
</comment>
<comment type="domain">
    <text evidence="2">The RING-type zinc finger domain is essential for ubiquitin ligase activity.</text>
</comment>
<comment type="domain">
    <text evidence="2">The SBD domain (substrate-binding domain) mediates the homodimerization and the interaction with substrate proteins. It is related to the TRAF family.</text>
</comment>
<comment type="disruption phenotype">
    <text evidence="5">No visible phenotype, may be due to the existence of 4 homologous proteins.</text>
</comment>
<comment type="miscellaneous">
    <molecule>Isoform 2</molecule>
    <text evidence="13">May be due to intron retention.</text>
</comment>
<comment type="similarity">
    <text evidence="13">Belongs to the SINA (Seven in absentia) family.</text>
</comment>
<name>SINA2_ARATH</name>
<dbReference type="EC" id="2.3.2.27" evidence="8"/>
<dbReference type="EMBL" id="AL132977">
    <property type="protein sequence ID" value="CAB67632.1"/>
    <property type="molecule type" value="Genomic_DNA"/>
</dbReference>
<dbReference type="EMBL" id="CP002686">
    <property type="protein sequence ID" value="AEE79735.1"/>
    <property type="molecule type" value="Genomic_DNA"/>
</dbReference>
<dbReference type="EMBL" id="CP002686">
    <property type="protein sequence ID" value="ANM64730.1"/>
    <property type="molecule type" value="Genomic_DNA"/>
</dbReference>
<dbReference type="EMBL" id="CP002686">
    <property type="protein sequence ID" value="ANM64731.1"/>
    <property type="molecule type" value="Genomic_DNA"/>
</dbReference>
<dbReference type="EMBL" id="BT025655">
    <property type="protein sequence ID" value="ABF74716.1"/>
    <property type="molecule type" value="mRNA"/>
</dbReference>
<dbReference type="EMBL" id="AK229466">
    <property type="protein sequence ID" value="BAF01324.1"/>
    <property type="molecule type" value="mRNA"/>
</dbReference>
<dbReference type="EMBL" id="AY087768">
    <property type="protein sequence ID" value="AAM65304.1"/>
    <property type="molecule type" value="mRNA"/>
</dbReference>
<dbReference type="PIR" id="T46026">
    <property type="entry name" value="T46026"/>
</dbReference>
<dbReference type="RefSeq" id="NP_001326739.1">
    <molecule id="Q9M2P4-1"/>
    <property type="nucleotide sequence ID" value="NM_001339903.1"/>
</dbReference>
<dbReference type="RefSeq" id="NP_001326740.1">
    <molecule id="Q9M2P4-2"/>
    <property type="nucleotide sequence ID" value="NM_001339902.1"/>
</dbReference>
<dbReference type="RefSeq" id="NP_191363.1">
    <molecule id="Q9M2P4-1"/>
    <property type="nucleotide sequence ID" value="NM_115666.2"/>
</dbReference>
<dbReference type="SMR" id="Q9M2P4"/>
<dbReference type="BioGRID" id="10288">
    <property type="interactions" value="2"/>
</dbReference>
<dbReference type="FunCoup" id="Q9M2P4">
    <property type="interactions" value="1291"/>
</dbReference>
<dbReference type="IntAct" id="Q9M2P4">
    <property type="interactions" value="1"/>
</dbReference>
<dbReference type="STRING" id="3702.Q9M2P4"/>
<dbReference type="PaxDb" id="3702-AT3G58040.1"/>
<dbReference type="ProteomicsDB" id="234551">
    <molecule id="Q9M2P4-1"/>
</dbReference>
<dbReference type="EnsemblPlants" id="AT3G58040.1">
    <molecule id="Q9M2P4-1"/>
    <property type="protein sequence ID" value="AT3G58040.1"/>
    <property type="gene ID" value="AT3G58040"/>
</dbReference>
<dbReference type="EnsemblPlants" id="AT3G58040.2">
    <molecule id="Q9M2P4-2"/>
    <property type="protein sequence ID" value="AT3G58040.2"/>
    <property type="gene ID" value="AT3G58040"/>
</dbReference>
<dbReference type="EnsemblPlants" id="AT3G58040.3">
    <molecule id="Q9M2P4-1"/>
    <property type="protein sequence ID" value="AT3G58040.3"/>
    <property type="gene ID" value="AT3G58040"/>
</dbReference>
<dbReference type="GeneID" id="824973"/>
<dbReference type="Gramene" id="AT3G58040.1">
    <molecule id="Q9M2P4-1"/>
    <property type="protein sequence ID" value="AT3G58040.1"/>
    <property type="gene ID" value="AT3G58040"/>
</dbReference>
<dbReference type="Gramene" id="AT3G58040.2">
    <molecule id="Q9M2P4-2"/>
    <property type="protein sequence ID" value="AT3G58040.2"/>
    <property type="gene ID" value="AT3G58040"/>
</dbReference>
<dbReference type="Gramene" id="AT3G58040.3">
    <molecule id="Q9M2P4-1"/>
    <property type="protein sequence ID" value="AT3G58040.3"/>
    <property type="gene ID" value="AT3G58040"/>
</dbReference>
<dbReference type="KEGG" id="ath:AT3G58040"/>
<dbReference type="Araport" id="AT3G58040"/>
<dbReference type="TAIR" id="AT3G58040">
    <property type="gene designation" value="SINAT2"/>
</dbReference>
<dbReference type="eggNOG" id="KOG3002">
    <property type="taxonomic scope" value="Eukaryota"/>
</dbReference>
<dbReference type="HOGENOM" id="CLU_028215_1_1_1"/>
<dbReference type="InParanoid" id="Q9M2P4"/>
<dbReference type="OMA" id="TSIAQFC"/>
<dbReference type="OrthoDB" id="941555at2759"/>
<dbReference type="PhylomeDB" id="Q9M2P4"/>
<dbReference type="UniPathway" id="UPA00143"/>
<dbReference type="PRO" id="PR:Q9M2P4"/>
<dbReference type="Proteomes" id="UP000006548">
    <property type="component" value="Chromosome 3"/>
</dbReference>
<dbReference type="ExpressionAtlas" id="Q9M2P4">
    <property type="expression patterns" value="baseline and differential"/>
</dbReference>
<dbReference type="GO" id="GO:0005776">
    <property type="term" value="C:autophagosome"/>
    <property type="evidence" value="ECO:0007669"/>
    <property type="project" value="UniProtKB-SubCell"/>
</dbReference>
<dbReference type="GO" id="GO:0005771">
    <property type="term" value="C:multivesicular body"/>
    <property type="evidence" value="ECO:0007669"/>
    <property type="project" value="UniProtKB-SubCell"/>
</dbReference>
<dbReference type="GO" id="GO:0016740">
    <property type="term" value="F:transferase activity"/>
    <property type="evidence" value="ECO:0007669"/>
    <property type="project" value="UniProtKB-KW"/>
</dbReference>
<dbReference type="GO" id="GO:0008270">
    <property type="term" value="F:zinc ion binding"/>
    <property type="evidence" value="ECO:0007669"/>
    <property type="project" value="UniProtKB-KW"/>
</dbReference>
<dbReference type="GO" id="GO:0016567">
    <property type="term" value="P:protein ubiquitination"/>
    <property type="evidence" value="ECO:0000314"/>
    <property type="project" value="UniProtKB"/>
</dbReference>
<dbReference type="GO" id="GO:2000785">
    <property type="term" value="P:regulation of autophagosome assembly"/>
    <property type="evidence" value="ECO:0000315"/>
    <property type="project" value="UniProtKB"/>
</dbReference>
<dbReference type="GO" id="GO:0006511">
    <property type="term" value="P:ubiquitin-dependent protein catabolic process"/>
    <property type="evidence" value="ECO:0007669"/>
    <property type="project" value="InterPro"/>
</dbReference>
<dbReference type="CDD" id="cd16571">
    <property type="entry name" value="RING-HC_SIAHs"/>
    <property type="match status" value="1"/>
</dbReference>
<dbReference type="CDD" id="cd03829">
    <property type="entry name" value="Sina"/>
    <property type="match status" value="1"/>
</dbReference>
<dbReference type="FunFam" id="3.30.40.10:FF:000041">
    <property type="entry name" value="E3 ubiquitin-protein ligase SINAT3"/>
    <property type="match status" value="1"/>
</dbReference>
<dbReference type="FunFam" id="2.60.210.10:FF:000004">
    <property type="entry name" value="E3 ubiquitin-protein ligase SINAT5-like"/>
    <property type="match status" value="1"/>
</dbReference>
<dbReference type="FunFam" id="3.30.40.10:FF:000311">
    <property type="entry name" value="E3 ubiquitin-protein ligase SINAT5-like"/>
    <property type="match status" value="1"/>
</dbReference>
<dbReference type="Gene3D" id="2.60.210.10">
    <property type="entry name" value="Apoptosis, Tumor Necrosis Factor Receptor Associated Protein 2, Chain A"/>
    <property type="match status" value="1"/>
</dbReference>
<dbReference type="Gene3D" id="3.30.40.10">
    <property type="entry name" value="Zinc/RING finger domain, C3HC4 (zinc finger)"/>
    <property type="match status" value="2"/>
</dbReference>
<dbReference type="InterPro" id="IPR018121">
    <property type="entry name" value="7-in-absentia-prot_TRAF-dom"/>
</dbReference>
<dbReference type="InterPro" id="IPR052088">
    <property type="entry name" value="E3_ubiquitin-ligase_SINA"/>
</dbReference>
<dbReference type="InterPro" id="IPR049548">
    <property type="entry name" value="Sina-like_RING"/>
</dbReference>
<dbReference type="InterPro" id="IPR008974">
    <property type="entry name" value="TRAF-like"/>
</dbReference>
<dbReference type="InterPro" id="IPR001841">
    <property type="entry name" value="Znf_RING"/>
</dbReference>
<dbReference type="InterPro" id="IPR013083">
    <property type="entry name" value="Znf_RING/FYVE/PHD"/>
</dbReference>
<dbReference type="InterPro" id="IPR013010">
    <property type="entry name" value="Znf_SIAH"/>
</dbReference>
<dbReference type="PANTHER" id="PTHR10315">
    <property type="entry name" value="E3 UBIQUITIN PROTEIN LIGASE SIAH"/>
    <property type="match status" value="1"/>
</dbReference>
<dbReference type="PANTHER" id="PTHR10315:SF117">
    <property type="entry name" value="RING-TYPE E3 UBIQUITIN TRANSFERASE"/>
    <property type="match status" value="1"/>
</dbReference>
<dbReference type="Pfam" id="PF21362">
    <property type="entry name" value="Sina_RING"/>
    <property type="match status" value="1"/>
</dbReference>
<dbReference type="Pfam" id="PF03145">
    <property type="entry name" value="Sina_TRAF"/>
    <property type="match status" value="1"/>
</dbReference>
<dbReference type="Pfam" id="PF21361">
    <property type="entry name" value="Sina_ZnF"/>
    <property type="match status" value="1"/>
</dbReference>
<dbReference type="SUPFAM" id="SSF57850">
    <property type="entry name" value="RING/U-box"/>
    <property type="match status" value="1"/>
</dbReference>
<dbReference type="SUPFAM" id="SSF49599">
    <property type="entry name" value="TRAF domain-like"/>
    <property type="match status" value="1"/>
</dbReference>
<dbReference type="PROSITE" id="PS50089">
    <property type="entry name" value="ZF_RING_2"/>
    <property type="match status" value="1"/>
</dbReference>
<dbReference type="PROSITE" id="PS51081">
    <property type="entry name" value="ZF_SIAH"/>
    <property type="match status" value="1"/>
</dbReference>
<organism>
    <name type="scientific">Arabidopsis thaliana</name>
    <name type="common">Mouse-ear cress</name>
    <dbReference type="NCBI Taxonomy" id="3702"/>
    <lineage>
        <taxon>Eukaryota</taxon>
        <taxon>Viridiplantae</taxon>
        <taxon>Streptophyta</taxon>
        <taxon>Embryophyta</taxon>
        <taxon>Tracheophyta</taxon>
        <taxon>Spermatophyta</taxon>
        <taxon>Magnoliopsida</taxon>
        <taxon>eudicotyledons</taxon>
        <taxon>Gunneridae</taxon>
        <taxon>Pentapetalae</taxon>
        <taxon>rosids</taxon>
        <taxon>malvids</taxon>
        <taxon>Brassicales</taxon>
        <taxon>Brassicaceae</taxon>
        <taxon>Camelineae</taxon>
        <taxon>Arabidopsis</taxon>
    </lineage>
</organism>
<feature type="chain" id="PRO_0000056181" description="E3 ubiquitin-protein ligase SINAT2">
    <location>
        <begin position="1"/>
        <end position="308"/>
    </location>
</feature>
<feature type="zinc finger region" description="RING-type" evidence="3">
    <location>
        <begin position="60"/>
        <end position="96"/>
    </location>
</feature>
<feature type="zinc finger region" description="SIAH-type" evidence="4">
    <location>
        <begin position="113"/>
        <end position="173"/>
    </location>
</feature>
<feature type="region of interest" description="SBD">
    <location>
        <begin position="110"/>
        <end position="303"/>
    </location>
</feature>
<feature type="binding site" evidence="1">
    <location>
        <position position="118"/>
    </location>
    <ligand>
        <name>Zn(2+)</name>
        <dbReference type="ChEBI" id="CHEBI:29105"/>
        <label>1</label>
    </ligand>
</feature>
<feature type="binding site" evidence="1">
    <location>
        <position position="125"/>
    </location>
    <ligand>
        <name>Zn(2+)</name>
        <dbReference type="ChEBI" id="CHEBI:29105"/>
        <label>1</label>
    </ligand>
</feature>
<feature type="binding site" evidence="1">
    <location>
        <position position="137"/>
    </location>
    <ligand>
        <name>Zn(2+)</name>
        <dbReference type="ChEBI" id="CHEBI:29105"/>
        <label>1</label>
    </ligand>
</feature>
<feature type="binding site" evidence="1">
    <location>
        <position position="141"/>
    </location>
    <ligand>
        <name>Zn(2+)</name>
        <dbReference type="ChEBI" id="CHEBI:29105"/>
        <label>1</label>
    </ligand>
</feature>
<feature type="binding site" evidence="1">
    <location>
        <position position="148"/>
    </location>
    <ligand>
        <name>Zn(2+)</name>
        <dbReference type="ChEBI" id="CHEBI:29105"/>
        <label>2</label>
    </ligand>
</feature>
<feature type="binding site" evidence="1">
    <location>
        <position position="155"/>
    </location>
    <ligand>
        <name>Zn(2+)</name>
        <dbReference type="ChEBI" id="CHEBI:29105"/>
        <label>2</label>
    </ligand>
</feature>
<feature type="binding site" evidence="1">
    <location>
        <position position="167"/>
    </location>
    <ligand>
        <name>Zn(2+)</name>
        <dbReference type="ChEBI" id="CHEBI:29105"/>
        <label>2</label>
    </ligand>
</feature>
<feature type="binding site" evidence="1">
    <location>
        <position position="172"/>
    </location>
    <ligand>
        <name>Zn(2+)</name>
        <dbReference type="ChEBI" id="CHEBI:29105"/>
        <label>2</label>
    </ligand>
</feature>
<feature type="splice variant" id="VSP_027587" description="In isoform 2." evidence="12">
    <original>FNCFGRQFCLHFEAFQ</original>
    <variation>KLSFDMFSSFYQRFLI</variation>
    <location>
        <begin position="204"/>
        <end position="219"/>
    </location>
</feature>
<feature type="splice variant" id="VSP_027588" description="In isoform 2." evidence="12">
    <location>
        <begin position="220"/>
        <end position="308"/>
    </location>
</feature>
<feature type="mutagenesis site" description="Loss of ubiquitin ligase activity." evidence="10">
    <original>H</original>
    <variation>Y</variation>
    <location>
        <position position="78"/>
    </location>
</feature>
<gene>
    <name evidence="11" type="primary">SINAT2</name>
    <name type="ordered locus">At3g58040</name>
    <name type="ORF">T10K17.250</name>
</gene>
<proteinExistence type="evidence at protein level"/>
<sequence>MAPGGSALKEVMESNSTGMDYEVKTAKVEVNNNKPTKPGSAGIGKYGIHSNNGVYELLECPVCTNLMYPPIHQCPNGHTLCSNCKLRVQNTCPTCRYELGNIRCLALEKVAESLEVPCRYQNLGCHDIFPYYSKLKHEQHCRFRPYTCPYAGSECSVTGDIPTLVVHLKDDHKVDMHDGCTFNHRYVKSNPHEVENATWMLTVFNCFGRQFCLHFEAFQLGMAPVYMAFLRFMGDENEAKKFSYSLEVGAHGRKLTWQGIPRSIRDSHRKVRDSQDGLIIPRNLALYFSGGDRQELKLRVTGRIWKEE</sequence>
<accession>Q9M2P4</accession>
<accession>Q0WNH5</accession>
<accession>Q1ECQ0</accession>
<protein>
    <recommendedName>
        <fullName evidence="13">E3 ubiquitin-protein ligase SINAT2</fullName>
        <ecNumber evidence="8">2.3.2.27</ecNumber>
    </recommendedName>
    <alternativeName>
        <fullName evidence="13">RING-type E3 ubiquitin transferase SINAT2</fullName>
    </alternativeName>
    <alternativeName>
        <fullName evidence="13">Seven in absentia homolog 2</fullName>
    </alternativeName>
</protein>
<reference key="1">
    <citation type="journal article" date="2000" name="Nature">
        <title>Sequence and analysis of chromosome 3 of the plant Arabidopsis thaliana.</title>
        <authorList>
            <person name="Salanoubat M."/>
            <person name="Lemcke K."/>
            <person name="Rieger M."/>
            <person name="Ansorge W."/>
            <person name="Unseld M."/>
            <person name="Fartmann B."/>
            <person name="Valle G."/>
            <person name="Bloecker H."/>
            <person name="Perez-Alonso M."/>
            <person name="Obermaier B."/>
            <person name="Delseny M."/>
            <person name="Boutry M."/>
            <person name="Grivell L.A."/>
            <person name="Mache R."/>
            <person name="Puigdomenech P."/>
            <person name="De Simone V."/>
            <person name="Choisne N."/>
            <person name="Artiguenave F."/>
            <person name="Robert C."/>
            <person name="Brottier P."/>
            <person name="Wincker P."/>
            <person name="Cattolico L."/>
            <person name="Weissenbach J."/>
            <person name="Saurin W."/>
            <person name="Quetier F."/>
            <person name="Schaefer M."/>
            <person name="Mueller-Auer S."/>
            <person name="Gabel C."/>
            <person name="Fuchs M."/>
            <person name="Benes V."/>
            <person name="Wurmbach E."/>
            <person name="Drzonek H."/>
            <person name="Erfle H."/>
            <person name="Jordan N."/>
            <person name="Bangert S."/>
            <person name="Wiedelmann R."/>
            <person name="Kranz H."/>
            <person name="Voss H."/>
            <person name="Holland R."/>
            <person name="Brandt P."/>
            <person name="Nyakatura G."/>
            <person name="Vezzi A."/>
            <person name="D'Angelo M."/>
            <person name="Pallavicini A."/>
            <person name="Toppo S."/>
            <person name="Simionati B."/>
            <person name="Conrad A."/>
            <person name="Hornischer K."/>
            <person name="Kauer G."/>
            <person name="Loehnert T.-H."/>
            <person name="Nordsiek G."/>
            <person name="Reichelt J."/>
            <person name="Scharfe M."/>
            <person name="Schoen O."/>
            <person name="Bargues M."/>
            <person name="Terol J."/>
            <person name="Climent J."/>
            <person name="Navarro P."/>
            <person name="Collado C."/>
            <person name="Perez-Perez A."/>
            <person name="Ottenwaelder B."/>
            <person name="Duchemin D."/>
            <person name="Cooke R."/>
            <person name="Laudie M."/>
            <person name="Berger-Llauro C."/>
            <person name="Purnelle B."/>
            <person name="Masuy D."/>
            <person name="de Haan M."/>
            <person name="Maarse A.C."/>
            <person name="Alcaraz J.-P."/>
            <person name="Cottet A."/>
            <person name="Casacuberta E."/>
            <person name="Monfort A."/>
            <person name="Argiriou A."/>
            <person name="Flores M."/>
            <person name="Liguori R."/>
            <person name="Vitale D."/>
            <person name="Mannhaupt G."/>
            <person name="Haase D."/>
            <person name="Schoof H."/>
            <person name="Rudd S."/>
            <person name="Zaccaria P."/>
            <person name="Mewes H.-W."/>
            <person name="Mayer K.F.X."/>
            <person name="Kaul S."/>
            <person name="Town C.D."/>
            <person name="Koo H.L."/>
            <person name="Tallon L.J."/>
            <person name="Jenkins J."/>
            <person name="Rooney T."/>
            <person name="Rizzo M."/>
            <person name="Walts A."/>
            <person name="Utterback T."/>
            <person name="Fujii C.Y."/>
            <person name="Shea T.P."/>
            <person name="Creasy T.H."/>
            <person name="Haas B."/>
            <person name="Maiti R."/>
            <person name="Wu D."/>
            <person name="Peterson J."/>
            <person name="Van Aken S."/>
            <person name="Pai G."/>
            <person name="Militscher J."/>
            <person name="Sellers P."/>
            <person name="Gill J.E."/>
            <person name="Feldblyum T.V."/>
            <person name="Preuss D."/>
            <person name="Lin X."/>
            <person name="Nierman W.C."/>
            <person name="Salzberg S.L."/>
            <person name="White O."/>
            <person name="Venter J.C."/>
            <person name="Fraser C.M."/>
            <person name="Kaneko T."/>
            <person name="Nakamura Y."/>
            <person name="Sato S."/>
            <person name="Kato T."/>
            <person name="Asamizu E."/>
            <person name="Sasamoto S."/>
            <person name="Kimura T."/>
            <person name="Idesawa K."/>
            <person name="Kawashima K."/>
            <person name="Kishida Y."/>
            <person name="Kiyokawa C."/>
            <person name="Kohara M."/>
            <person name="Matsumoto M."/>
            <person name="Matsuno A."/>
            <person name="Muraki A."/>
            <person name="Nakayama S."/>
            <person name="Nakazaki N."/>
            <person name="Shinpo S."/>
            <person name="Takeuchi C."/>
            <person name="Wada T."/>
            <person name="Watanabe A."/>
            <person name="Yamada M."/>
            <person name="Yasuda M."/>
            <person name="Tabata S."/>
        </authorList>
    </citation>
    <scope>NUCLEOTIDE SEQUENCE [LARGE SCALE GENOMIC DNA]</scope>
    <source>
        <strain>cv. Columbia</strain>
    </source>
</reference>
<reference key="2">
    <citation type="journal article" date="2017" name="Plant J.">
        <title>Araport11: a complete reannotation of the Arabidopsis thaliana reference genome.</title>
        <authorList>
            <person name="Cheng C.Y."/>
            <person name="Krishnakumar V."/>
            <person name="Chan A.P."/>
            <person name="Thibaud-Nissen F."/>
            <person name="Schobel S."/>
            <person name="Town C.D."/>
        </authorList>
    </citation>
    <scope>GENOME REANNOTATION</scope>
    <source>
        <strain>cv. Columbia</strain>
    </source>
</reference>
<reference key="3">
    <citation type="submission" date="2006-06" db="EMBL/GenBank/DDBJ databases">
        <title>Arabidopsis ORF clones.</title>
        <authorList>
            <person name="Shinn P."/>
            <person name="Chen H."/>
            <person name="Kim C.J."/>
            <person name="Quinitio C."/>
            <person name="Ecker J.R."/>
        </authorList>
    </citation>
    <scope>NUCLEOTIDE SEQUENCE [LARGE SCALE MRNA] (ISOFORM 1)</scope>
    <source>
        <strain>cv. Columbia</strain>
    </source>
</reference>
<reference key="4">
    <citation type="submission" date="2006-07" db="EMBL/GenBank/DDBJ databases">
        <title>Large-scale analysis of RIKEN Arabidopsis full-length (RAFL) cDNAs.</title>
        <authorList>
            <person name="Totoki Y."/>
            <person name="Seki M."/>
            <person name="Ishida J."/>
            <person name="Nakajima M."/>
            <person name="Enju A."/>
            <person name="Kamiya A."/>
            <person name="Narusaka M."/>
            <person name="Shin-i T."/>
            <person name="Nakagawa M."/>
            <person name="Sakamoto N."/>
            <person name="Oishi K."/>
            <person name="Kohara Y."/>
            <person name="Kobayashi M."/>
            <person name="Toyoda A."/>
            <person name="Sakaki Y."/>
            <person name="Sakurai T."/>
            <person name="Iida K."/>
            <person name="Akiyama K."/>
            <person name="Satou M."/>
            <person name="Toyoda T."/>
            <person name="Konagaya A."/>
            <person name="Carninci P."/>
            <person name="Kawai J."/>
            <person name="Hayashizaki Y."/>
            <person name="Shinozaki K."/>
        </authorList>
    </citation>
    <scope>NUCLEOTIDE SEQUENCE [LARGE SCALE MRNA] (ISOFORM 2)</scope>
    <source>
        <strain>cv. Columbia</strain>
    </source>
</reference>
<reference key="5">
    <citation type="submission" date="2002-03" db="EMBL/GenBank/DDBJ databases">
        <title>Full-length cDNA from Arabidopsis thaliana.</title>
        <authorList>
            <person name="Brover V.V."/>
            <person name="Troukhan M.E."/>
            <person name="Alexandrov N.A."/>
            <person name="Lu Y.-P."/>
            <person name="Flavell R.B."/>
            <person name="Feldmann K.A."/>
        </authorList>
    </citation>
    <scope>NUCLEOTIDE SEQUENCE [LARGE SCALE MRNA] (ISOFORM 1)</scope>
</reference>
<reference key="6">
    <citation type="journal article" date="2007" name="Plant Physiol.">
        <title>Transcription factor RAP2.2 and its interacting partner SINAT2: stable elements in the carotenogenesis of Arabidopsis leaves.</title>
        <authorList>
            <person name="Welsch R."/>
            <person name="Maass D."/>
            <person name="Voegel T."/>
            <person name="Dellapenna D."/>
            <person name="Beyer P."/>
        </authorList>
    </citation>
    <scope>INTERACTION WITH RAP2-2</scope>
    <scope>DISRUPTION PHENOTYPE</scope>
</reference>
<reference key="7">
    <citation type="journal article" date="2012" name="Plant J.">
        <title>The wavy growth 3 E3 ligase family controls the gravitropic response in Arabidopsis roots.</title>
        <authorList>
            <person name="Sakai T."/>
            <person name="Mochizuki S."/>
            <person name="Haga K."/>
            <person name="Uehara Y."/>
            <person name="Suzuki A."/>
            <person name="Harada A."/>
            <person name="Wada T."/>
            <person name="Ishiguro S."/>
            <person name="Okada K."/>
        </authorList>
    </citation>
    <scope>INTERACTION WITH WAV3</scope>
    <source>
        <strain>cv. Landsberg erecta</strain>
    </source>
</reference>
<reference key="8">
    <citation type="journal article" date="2014" name="New Phytol.">
        <title>The tumor necrosis factor receptor-associated factor (TRAF)-like family protein SEVEN IN ABSENTIA 2 (SINA2) promotes drought tolerance in an ABA-dependent manner in Arabidopsis.</title>
        <authorList>
            <person name="Bao Y."/>
            <person name="Wang C."/>
            <person name="Jiang C."/>
            <person name="Pan J."/>
            <person name="Zhang G."/>
            <person name="Liu H."/>
            <person name="Zhang H."/>
        </authorList>
    </citation>
    <scope>INTERACTION WITH SINAT6</scope>
    <scope>INDUCTION</scope>
</reference>
<reference key="9">
    <citation type="journal article" date="2017" name="Plant Cell">
        <title>TRAF family proteins regulate autophagy dynamics by modulating AUTOPHAGY PROTEIN6 stability in Arabidopsis.</title>
        <authorList>
            <person name="Qi H."/>
            <person name="Xia F.N."/>
            <person name="Xie L.J."/>
            <person name="Yu L.J."/>
            <person name="Chen Q.F."/>
            <person name="Zhuang X.H."/>
            <person name="Wang Q."/>
            <person name="Li F."/>
            <person name="Jiang L."/>
            <person name="Xie Q."/>
            <person name="Xiao S."/>
        </authorList>
    </citation>
    <scope>FUNCTION</scope>
    <scope>CATALYTIC ACTIVITY</scope>
    <scope>INTERACTION WITH ATG6 AND TRAF1A</scope>
</reference>
<reference key="10">
    <citation type="journal article" date="2020" name="J. Integr. Plant Biol.">
        <title>SINAT E3 ligases regulate the stability of the ESCRT component FREE1 in response to iron deficiency in plants.</title>
        <authorList>
            <person name="Xiao Z."/>
            <person name="Yang C."/>
            <person name="Liu C."/>
            <person name="Yang L."/>
            <person name="Yang S."/>
            <person name="Zhou J."/>
            <person name="Li F."/>
            <person name="Jiang L."/>
            <person name="Xiao S."/>
            <person name="Gao C."/>
            <person name="Shen W."/>
        </authorList>
    </citation>
    <scope>FUNCTION</scope>
    <scope>INTERACTION WITH FREE1</scope>
    <scope>SUBCELLULAR LOCATION</scope>
    <scope>MUTAGENESIS OF HIS-78</scope>
</reference>
<reference key="11">
    <citation type="journal article" date="2020" name="Plant Cell">
        <title>SINAT E3 ubiquitin ligases mediate FREE1 and VPS23A degradation to modulate abscisic acid signaling.</title>
        <authorList>
            <person name="Xia F.N."/>
            <person name="Zeng B."/>
            <person name="Liu H.S."/>
            <person name="Qi H."/>
            <person name="Xie L.J."/>
            <person name="Yu L.J."/>
            <person name="Chen Q.F."/>
            <person name="Li J.F."/>
            <person name="Chen Y.Q."/>
            <person name="Jiang L."/>
            <person name="Xiao S."/>
        </authorList>
    </citation>
    <scope>FUNCTION</scope>
    <scope>INTERACTION WITH FREE1 AND ELC/VPS23A</scope>
    <scope>SUBCELLULAR LOCATION</scope>
</reference>
<evidence type="ECO:0000250" key="1"/>
<evidence type="ECO:0000250" key="2">
    <source>
        <dbReference type="UniProtKB" id="Q8IUQ4"/>
    </source>
</evidence>
<evidence type="ECO:0000255" key="3">
    <source>
        <dbReference type="PROSITE-ProRule" id="PRU00175"/>
    </source>
</evidence>
<evidence type="ECO:0000255" key="4">
    <source>
        <dbReference type="PROSITE-ProRule" id="PRU00455"/>
    </source>
</evidence>
<evidence type="ECO:0000269" key="5">
    <source>
    </source>
</evidence>
<evidence type="ECO:0000269" key="6">
    <source>
    </source>
</evidence>
<evidence type="ECO:0000269" key="7">
    <source>
    </source>
</evidence>
<evidence type="ECO:0000269" key="8">
    <source>
    </source>
</evidence>
<evidence type="ECO:0000269" key="9">
    <source>
    </source>
</evidence>
<evidence type="ECO:0000269" key="10">
    <source>
    </source>
</evidence>
<evidence type="ECO:0000303" key="11">
    <source>
    </source>
</evidence>
<evidence type="ECO:0000303" key="12">
    <source ref="4"/>
</evidence>
<evidence type="ECO:0000305" key="13"/>